<feature type="chain" id="PRO_0000284033" description="Histone chaperone ASF1">
    <location>
        <begin position="1"/>
        <end position="208"/>
    </location>
</feature>
<feature type="region of interest" description="Disordered" evidence="2">
    <location>
        <begin position="162"/>
        <end position="208"/>
    </location>
</feature>
<reference key="1">
    <citation type="journal article" date="2005" name="Science">
        <title>The genome of the basidiomycetous yeast and human pathogen Cryptococcus neoformans.</title>
        <authorList>
            <person name="Loftus B.J."/>
            <person name="Fung E."/>
            <person name="Roncaglia P."/>
            <person name="Rowley D."/>
            <person name="Amedeo P."/>
            <person name="Bruno D."/>
            <person name="Vamathevan J."/>
            <person name="Miranda M."/>
            <person name="Anderson I.J."/>
            <person name="Fraser J.A."/>
            <person name="Allen J.E."/>
            <person name="Bosdet I.E."/>
            <person name="Brent M.R."/>
            <person name="Chiu R."/>
            <person name="Doering T.L."/>
            <person name="Donlin M.J."/>
            <person name="D'Souza C.A."/>
            <person name="Fox D.S."/>
            <person name="Grinberg V."/>
            <person name="Fu J."/>
            <person name="Fukushima M."/>
            <person name="Haas B.J."/>
            <person name="Huang J.C."/>
            <person name="Janbon G."/>
            <person name="Jones S.J.M."/>
            <person name="Koo H.L."/>
            <person name="Krzywinski M.I."/>
            <person name="Kwon-Chung K.J."/>
            <person name="Lengeler K.B."/>
            <person name="Maiti R."/>
            <person name="Marra M.A."/>
            <person name="Marra R.E."/>
            <person name="Mathewson C.A."/>
            <person name="Mitchell T.G."/>
            <person name="Pertea M."/>
            <person name="Riggs F.R."/>
            <person name="Salzberg S.L."/>
            <person name="Schein J.E."/>
            <person name="Shvartsbeyn A."/>
            <person name="Shin H."/>
            <person name="Shumway M."/>
            <person name="Specht C.A."/>
            <person name="Suh B.B."/>
            <person name="Tenney A."/>
            <person name="Utterback T.R."/>
            <person name="Wickes B.L."/>
            <person name="Wortman J.R."/>
            <person name="Wye N.H."/>
            <person name="Kronstad J.W."/>
            <person name="Lodge J.K."/>
            <person name="Heitman J."/>
            <person name="Davis R.W."/>
            <person name="Fraser C.M."/>
            <person name="Hyman R.W."/>
        </authorList>
    </citation>
    <scope>NUCLEOTIDE SEQUENCE [LARGE SCALE GENOMIC DNA]</scope>
    <source>
        <strain>JEC21 / ATCC MYA-565</strain>
    </source>
</reference>
<name>ASF1_CRYNJ</name>
<evidence type="ECO:0000250" key="1"/>
<evidence type="ECO:0000256" key="2">
    <source>
        <dbReference type="SAM" id="MobiDB-lite"/>
    </source>
</evidence>
<evidence type="ECO:0000305" key="3"/>
<dbReference type="EMBL" id="AE017341">
    <property type="protein sequence ID" value="AAW40678.2"/>
    <property type="molecule type" value="Genomic_DNA"/>
</dbReference>
<dbReference type="RefSeq" id="XP_566497.1">
    <property type="nucleotide sequence ID" value="XM_566497.1"/>
</dbReference>
<dbReference type="SMR" id="P0CM26"/>
<dbReference type="FunCoup" id="P0CM26">
    <property type="interactions" value="482"/>
</dbReference>
<dbReference type="STRING" id="214684.P0CM26"/>
<dbReference type="PaxDb" id="214684-P0CM26"/>
<dbReference type="eggNOG" id="KOG3265">
    <property type="taxonomic scope" value="Eukaryota"/>
</dbReference>
<dbReference type="HOGENOM" id="CLU_060354_1_2_1"/>
<dbReference type="InParanoid" id="P0CM26"/>
<dbReference type="Proteomes" id="UP000002149">
    <property type="component" value="Chromosome 1"/>
</dbReference>
<dbReference type="GO" id="GO:0000785">
    <property type="term" value="C:chromatin"/>
    <property type="evidence" value="ECO:0000318"/>
    <property type="project" value="GO_Central"/>
</dbReference>
<dbReference type="GO" id="GO:0000781">
    <property type="term" value="C:chromosome, telomeric region"/>
    <property type="evidence" value="ECO:0007669"/>
    <property type="project" value="GOC"/>
</dbReference>
<dbReference type="GO" id="GO:0005829">
    <property type="term" value="C:cytosol"/>
    <property type="evidence" value="ECO:0007669"/>
    <property type="project" value="EnsemblFungi"/>
</dbReference>
<dbReference type="GO" id="GO:0070775">
    <property type="term" value="C:H3 histone acetyltransferase complex"/>
    <property type="evidence" value="ECO:0007669"/>
    <property type="project" value="EnsemblFungi"/>
</dbReference>
<dbReference type="GO" id="GO:0005634">
    <property type="term" value="C:nucleus"/>
    <property type="evidence" value="ECO:0000318"/>
    <property type="project" value="GO_Central"/>
</dbReference>
<dbReference type="GO" id="GO:0010698">
    <property type="term" value="F:acetyltransferase activator activity"/>
    <property type="evidence" value="ECO:0007669"/>
    <property type="project" value="EnsemblFungi"/>
</dbReference>
<dbReference type="GO" id="GO:0042393">
    <property type="term" value="F:histone binding"/>
    <property type="evidence" value="ECO:0000318"/>
    <property type="project" value="GO_Central"/>
</dbReference>
<dbReference type="GO" id="GO:0033554">
    <property type="term" value="P:cellular response to stress"/>
    <property type="evidence" value="ECO:0007669"/>
    <property type="project" value="EnsemblFungi"/>
</dbReference>
<dbReference type="GO" id="GO:0006335">
    <property type="term" value="P:DNA replication-dependent chromatin assembly"/>
    <property type="evidence" value="ECO:0000318"/>
    <property type="project" value="GO_Central"/>
</dbReference>
<dbReference type="GO" id="GO:0006337">
    <property type="term" value="P:nucleosome disassembly"/>
    <property type="evidence" value="ECO:0007669"/>
    <property type="project" value="EnsemblFungi"/>
</dbReference>
<dbReference type="GO" id="GO:0032968">
    <property type="term" value="P:positive regulation of transcription elongation by RNA polymerase II"/>
    <property type="evidence" value="ECO:0007669"/>
    <property type="project" value="EnsemblFungi"/>
</dbReference>
<dbReference type="GO" id="GO:0036211">
    <property type="term" value="P:protein modification process"/>
    <property type="evidence" value="ECO:0007669"/>
    <property type="project" value="EnsemblFungi"/>
</dbReference>
<dbReference type="GO" id="GO:0030466">
    <property type="term" value="P:silent mating-type cassette heterochromatin formation"/>
    <property type="evidence" value="ECO:0007669"/>
    <property type="project" value="EnsemblFungi"/>
</dbReference>
<dbReference type="GO" id="GO:0031509">
    <property type="term" value="P:subtelomeric heterochromatin formation"/>
    <property type="evidence" value="ECO:0007669"/>
    <property type="project" value="EnsemblFungi"/>
</dbReference>
<dbReference type="Gene3D" id="2.60.40.1490">
    <property type="entry name" value="Histone chaperone ASF1-like"/>
    <property type="match status" value="1"/>
</dbReference>
<dbReference type="InterPro" id="IPR006818">
    <property type="entry name" value="ASF1-like"/>
</dbReference>
<dbReference type="InterPro" id="IPR036747">
    <property type="entry name" value="ASF1-like_sf"/>
</dbReference>
<dbReference type="PANTHER" id="PTHR12040">
    <property type="entry name" value="ANTI-SILENCING PROTEIN 1"/>
    <property type="match status" value="1"/>
</dbReference>
<dbReference type="PANTHER" id="PTHR12040:SF0">
    <property type="entry name" value="HISTONE CHAPERONE ASF1"/>
    <property type="match status" value="1"/>
</dbReference>
<dbReference type="Pfam" id="PF04729">
    <property type="entry name" value="ASF1_hist_chap"/>
    <property type="match status" value="1"/>
</dbReference>
<dbReference type="SUPFAM" id="SSF101546">
    <property type="entry name" value="ASF1-like"/>
    <property type="match status" value="1"/>
</dbReference>
<keyword id="KW-0143">Chaperone</keyword>
<keyword id="KW-0156">Chromatin regulator</keyword>
<keyword id="KW-0539">Nucleus</keyword>
<keyword id="KW-1185">Reference proteome</keyword>
<keyword id="KW-0804">Transcription</keyword>
<keyword id="KW-0805">Transcription regulation</keyword>
<organism>
    <name type="scientific">Cryptococcus neoformans var. neoformans serotype D (strain JEC21 / ATCC MYA-565)</name>
    <name type="common">Filobasidiella neoformans</name>
    <dbReference type="NCBI Taxonomy" id="214684"/>
    <lineage>
        <taxon>Eukaryota</taxon>
        <taxon>Fungi</taxon>
        <taxon>Dikarya</taxon>
        <taxon>Basidiomycota</taxon>
        <taxon>Agaricomycotina</taxon>
        <taxon>Tremellomycetes</taxon>
        <taxon>Tremellales</taxon>
        <taxon>Cryptococcaceae</taxon>
        <taxon>Cryptococcus</taxon>
        <taxon>Cryptococcus neoformans species complex</taxon>
    </lineage>
</organism>
<protein>
    <recommendedName>
        <fullName>Histone chaperone ASF1</fullName>
    </recommendedName>
    <alternativeName>
        <fullName>Anti-silencing function protein 1</fullName>
    </alternativeName>
</protein>
<sequence>MSIVNIRNIELLNNPAKFDDPYNFRIKFEAIAPLVEDLDWRLIYVGSASSEEFDQELDNCSVGPIPAGINAFDFSAPAPAHHLLPSVEPDEILGVTVIIITASYREKEFVRVGYYVNTYYEDEELKENPPSVVQWDKLHRNVLIEKPKVTRFQNNWDSAPQLNTFDGQQPAAELPPSGGNPELFNAPLPPPVQRATAAGGMDVDQPMA</sequence>
<comment type="function">
    <text evidence="1">Histone chaperone that facilitates histone deposition and histone exchange and removal during nucleosome assembly and disassembly.</text>
</comment>
<comment type="subunit">
    <text evidence="1">Interacts with histone H3 and histone H4.</text>
</comment>
<comment type="subcellular location">
    <subcellularLocation>
        <location evidence="1">Nucleus</location>
    </subcellularLocation>
</comment>
<comment type="similarity">
    <text evidence="3">Belongs to the ASF1 family.</text>
</comment>
<proteinExistence type="inferred from homology"/>
<gene>
    <name type="primary">ASF1</name>
    <name type="ordered locus">CNA00750</name>
</gene>
<accession>P0CM26</accession>
<accession>Q561C0</accession>
<accession>Q5KQ21</accession>